<gene>
    <name evidence="1" type="primary">rnc</name>
    <name type="ordered locus">RAF_ORF0146</name>
</gene>
<proteinExistence type="inferred from homology"/>
<keyword id="KW-0963">Cytoplasm</keyword>
<keyword id="KW-0255">Endonuclease</keyword>
<keyword id="KW-0378">Hydrolase</keyword>
<keyword id="KW-0460">Magnesium</keyword>
<keyword id="KW-0479">Metal-binding</keyword>
<keyword id="KW-0507">mRNA processing</keyword>
<keyword id="KW-0540">Nuclease</keyword>
<keyword id="KW-0694">RNA-binding</keyword>
<keyword id="KW-0698">rRNA processing</keyword>
<keyword id="KW-0699">rRNA-binding</keyword>
<keyword id="KW-0819">tRNA processing</keyword>
<name>RNC_RICAE</name>
<sequence length="227" mass="26067">MESFEKLEKLLSYSFKNKELLIEALSHPSLRQHHEYKDDKDYERLEFLGDAVLNLVITEILFRNFANYNEGNLAKIRSYLVCKETICMVGAKLTLKNYIIMTHGEEVAGGRDNLNNIENATEALIAAIYLDSNIETTHDIIEKLWAEFIKVQNLTDYDPKTALQEWAQASDHHLPIYRLIKREGASHSSTFTVLVKVKDYEQTGTGHAIKEAEKNAARSLLHRLKND</sequence>
<protein>
    <recommendedName>
        <fullName evidence="1">Ribonuclease 3</fullName>
        <ecNumber evidence="1">3.1.26.3</ecNumber>
    </recommendedName>
    <alternativeName>
        <fullName evidence="1">Ribonuclease III</fullName>
        <shortName evidence="1">RNase III</shortName>
    </alternativeName>
</protein>
<feature type="chain" id="PRO_1000202844" description="Ribonuclease 3">
    <location>
        <begin position="1"/>
        <end position="227"/>
    </location>
</feature>
<feature type="domain" description="RNase III" evidence="1">
    <location>
        <begin position="4"/>
        <end position="133"/>
    </location>
</feature>
<feature type="domain" description="DRBM" evidence="1">
    <location>
        <begin position="158"/>
        <end position="226"/>
    </location>
</feature>
<feature type="active site" evidence="1">
    <location>
        <position position="50"/>
    </location>
</feature>
<feature type="active site" evidence="1">
    <location>
        <position position="122"/>
    </location>
</feature>
<feature type="binding site" evidence="1">
    <location>
        <position position="46"/>
    </location>
    <ligand>
        <name>Mg(2+)</name>
        <dbReference type="ChEBI" id="CHEBI:18420"/>
    </ligand>
</feature>
<feature type="binding site" evidence="1">
    <location>
        <position position="119"/>
    </location>
    <ligand>
        <name>Mg(2+)</name>
        <dbReference type="ChEBI" id="CHEBI:18420"/>
    </ligand>
</feature>
<feature type="binding site" evidence="1">
    <location>
        <position position="122"/>
    </location>
    <ligand>
        <name>Mg(2+)</name>
        <dbReference type="ChEBI" id="CHEBI:18420"/>
    </ligand>
</feature>
<accession>C3PMF3</accession>
<dbReference type="EC" id="3.1.26.3" evidence="1"/>
<dbReference type="EMBL" id="CP001612">
    <property type="protein sequence ID" value="ACP53113.1"/>
    <property type="molecule type" value="Genomic_DNA"/>
</dbReference>
<dbReference type="RefSeq" id="WP_004996667.1">
    <property type="nucleotide sequence ID" value="NC_012633.1"/>
</dbReference>
<dbReference type="SMR" id="C3PMF3"/>
<dbReference type="GeneID" id="95361874"/>
<dbReference type="KEGG" id="raf:RAF_ORF0146"/>
<dbReference type="HOGENOM" id="CLU_000907_1_1_5"/>
<dbReference type="Proteomes" id="UP000002305">
    <property type="component" value="Chromosome"/>
</dbReference>
<dbReference type="GO" id="GO:0005737">
    <property type="term" value="C:cytoplasm"/>
    <property type="evidence" value="ECO:0007669"/>
    <property type="project" value="UniProtKB-SubCell"/>
</dbReference>
<dbReference type="GO" id="GO:0003725">
    <property type="term" value="F:double-stranded RNA binding"/>
    <property type="evidence" value="ECO:0007669"/>
    <property type="project" value="TreeGrafter"/>
</dbReference>
<dbReference type="GO" id="GO:0046872">
    <property type="term" value="F:metal ion binding"/>
    <property type="evidence" value="ECO:0007669"/>
    <property type="project" value="UniProtKB-KW"/>
</dbReference>
<dbReference type="GO" id="GO:0004525">
    <property type="term" value="F:ribonuclease III activity"/>
    <property type="evidence" value="ECO:0007669"/>
    <property type="project" value="UniProtKB-UniRule"/>
</dbReference>
<dbReference type="GO" id="GO:0019843">
    <property type="term" value="F:rRNA binding"/>
    <property type="evidence" value="ECO:0007669"/>
    <property type="project" value="UniProtKB-KW"/>
</dbReference>
<dbReference type="GO" id="GO:0006397">
    <property type="term" value="P:mRNA processing"/>
    <property type="evidence" value="ECO:0007669"/>
    <property type="project" value="UniProtKB-UniRule"/>
</dbReference>
<dbReference type="GO" id="GO:0010468">
    <property type="term" value="P:regulation of gene expression"/>
    <property type="evidence" value="ECO:0007669"/>
    <property type="project" value="TreeGrafter"/>
</dbReference>
<dbReference type="GO" id="GO:0006364">
    <property type="term" value="P:rRNA processing"/>
    <property type="evidence" value="ECO:0007669"/>
    <property type="project" value="UniProtKB-UniRule"/>
</dbReference>
<dbReference type="GO" id="GO:0008033">
    <property type="term" value="P:tRNA processing"/>
    <property type="evidence" value="ECO:0007669"/>
    <property type="project" value="UniProtKB-KW"/>
</dbReference>
<dbReference type="CDD" id="cd10845">
    <property type="entry name" value="DSRM_RNAse_III_family"/>
    <property type="match status" value="1"/>
</dbReference>
<dbReference type="CDD" id="cd00593">
    <property type="entry name" value="RIBOc"/>
    <property type="match status" value="1"/>
</dbReference>
<dbReference type="FunFam" id="1.10.1520.10:FF:000001">
    <property type="entry name" value="Ribonuclease 3"/>
    <property type="match status" value="1"/>
</dbReference>
<dbReference type="Gene3D" id="3.30.160.20">
    <property type="match status" value="1"/>
</dbReference>
<dbReference type="Gene3D" id="1.10.1520.10">
    <property type="entry name" value="Ribonuclease III domain"/>
    <property type="match status" value="1"/>
</dbReference>
<dbReference type="HAMAP" id="MF_00104">
    <property type="entry name" value="RNase_III"/>
    <property type="match status" value="1"/>
</dbReference>
<dbReference type="InterPro" id="IPR014720">
    <property type="entry name" value="dsRBD_dom"/>
</dbReference>
<dbReference type="InterPro" id="IPR011907">
    <property type="entry name" value="RNase_III"/>
</dbReference>
<dbReference type="InterPro" id="IPR000999">
    <property type="entry name" value="RNase_III_dom"/>
</dbReference>
<dbReference type="InterPro" id="IPR036389">
    <property type="entry name" value="RNase_III_sf"/>
</dbReference>
<dbReference type="NCBIfam" id="TIGR02191">
    <property type="entry name" value="RNaseIII"/>
    <property type="match status" value="1"/>
</dbReference>
<dbReference type="PANTHER" id="PTHR11207:SF0">
    <property type="entry name" value="RIBONUCLEASE 3"/>
    <property type="match status" value="1"/>
</dbReference>
<dbReference type="PANTHER" id="PTHR11207">
    <property type="entry name" value="RIBONUCLEASE III"/>
    <property type="match status" value="1"/>
</dbReference>
<dbReference type="Pfam" id="PF00035">
    <property type="entry name" value="dsrm"/>
    <property type="match status" value="1"/>
</dbReference>
<dbReference type="Pfam" id="PF14622">
    <property type="entry name" value="Ribonucleas_3_3"/>
    <property type="match status" value="1"/>
</dbReference>
<dbReference type="SMART" id="SM00358">
    <property type="entry name" value="DSRM"/>
    <property type="match status" value="1"/>
</dbReference>
<dbReference type="SMART" id="SM00535">
    <property type="entry name" value="RIBOc"/>
    <property type="match status" value="1"/>
</dbReference>
<dbReference type="SUPFAM" id="SSF54768">
    <property type="entry name" value="dsRNA-binding domain-like"/>
    <property type="match status" value="1"/>
</dbReference>
<dbReference type="SUPFAM" id="SSF69065">
    <property type="entry name" value="RNase III domain-like"/>
    <property type="match status" value="1"/>
</dbReference>
<dbReference type="PROSITE" id="PS50137">
    <property type="entry name" value="DS_RBD"/>
    <property type="match status" value="1"/>
</dbReference>
<dbReference type="PROSITE" id="PS00517">
    <property type="entry name" value="RNASE_3_1"/>
    <property type="match status" value="1"/>
</dbReference>
<dbReference type="PROSITE" id="PS50142">
    <property type="entry name" value="RNASE_3_2"/>
    <property type="match status" value="1"/>
</dbReference>
<comment type="function">
    <text evidence="1">Digests double-stranded RNA. Involved in the processing of primary rRNA transcript to yield the immediate precursors to the large and small rRNAs (23S and 16S). Processes some mRNAs, and tRNAs when they are encoded in the rRNA operon. Processes pre-crRNA and tracrRNA of type II CRISPR loci if present in the organism.</text>
</comment>
<comment type="catalytic activity">
    <reaction evidence="1">
        <text>Endonucleolytic cleavage to 5'-phosphomonoester.</text>
        <dbReference type="EC" id="3.1.26.3"/>
    </reaction>
</comment>
<comment type="cofactor">
    <cofactor evidence="1">
        <name>Mg(2+)</name>
        <dbReference type="ChEBI" id="CHEBI:18420"/>
    </cofactor>
</comment>
<comment type="subunit">
    <text evidence="1">Homodimer.</text>
</comment>
<comment type="subcellular location">
    <subcellularLocation>
        <location evidence="1">Cytoplasm</location>
    </subcellularLocation>
</comment>
<comment type="similarity">
    <text evidence="1">Belongs to the ribonuclease III family.</text>
</comment>
<reference key="1">
    <citation type="journal article" date="2009" name="BMC Genomics">
        <title>Analysis of the Rickettsia africae genome reveals that virulence acquisition in Rickettsia species may be explained by genome reduction.</title>
        <authorList>
            <person name="Fournier P.-E."/>
            <person name="El Karkouri K."/>
            <person name="Leroy Q."/>
            <person name="Robert C."/>
            <person name="Giumelli B."/>
            <person name="Renesto P."/>
            <person name="Socolovschi C."/>
            <person name="Parola P."/>
            <person name="Audic S."/>
            <person name="Raoult D."/>
        </authorList>
    </citation>
    <scope>NUCLEOTIDE SEQUENCE [LARGE SCALE GENOMIC DNA]</scope>
    <source>
        <strain>ESF-5</strain>
    </source>
</reference>
<evidence type="ECO:0000255" key="1">
    <source>
        <dbReference type="HAMAP-Rule" id="MF_00104"/>
    </source>
</evidence>
<organism>
    <name type="scientific">Rickettsia africae (strain ESF-5)</name>
    <dbReference type="NCBI Taxonomy" id="347255"/>
    <lineage>
        <taxon>Bacteria</taxon>
        <taxon>Pseudomonadati</taxon>
        <taxon>Pseudomonadota</taxon>
        <taxon>Alphaproteobacteria</taxon>
        <taxon>Rickettsiales</taxon>
        <taxon>Rickettsiaceae</taxon>
        <taxon>Rickettsieae</taxon>
        <taxon>Rickettsia</taxon>
        <taxon>spotted fever group</taxon>
    </lineage>
</organism>